<keyword id="KW-0378">Hydrolase</keyword>
<keyword id="KW-0464">Manganese</keyword>
<keyword id="KW-0479">Metal-binding</keyword>
<dbReference type="EC" id="3.4.-.-"/>
<dbReference type="EMBL" id="AE015929">
    <property type="protein sequence ID" value="AAO04982.1"/>
    <property type="status" value="ALT_INIT"/>
    <property type="molecule type" value="Genomic_DNA"/>
</dbReference>
<dbReference type="RefSeq" id="NP_764938.1">
    <property type="nucleotide sequence ID" value="NC_004461.1"/>
</dbReference>
<dbReference type="RefSeq" id="WP_001830888.1">
    <property type="nucleotide sequence ID" value="NZ_WBME01000042.1"/>
</dbReference>
<dbReference type="SMR" id="Q8CNW9"/>
<dbReference type="KEGG" id="sep:SE_1383"/>
<dbReference type="PATRIC" id="fig|176280.10.peg.1351"/>
<dbReference type="eggNOG" id="COG0006">
    <property type="taxonomic scope" value="Bacteria"/>
</dbReference>
<dbReference type="HOGENOM" id="CLU_017266_4_2_9"/>
<dbReference type="OrthoDB" id="9806388at2"/>
<dbReference type="Proteomes" id="UP000001411">
    <property type="component" value="Chromosome"/>
</dbReference>
<dbReference type="GO" id="GO:0016787">
    <property type="term" value="F:hydrolase activity"/>
    <property type="evidence" value="ECO:0007669"/>
    <property type="project" value="UniProtKB-KW"/>
</dbReference>
<dbReference type="GO" id="GO:0046872">
    <property type="term" value="F:metal ion binding"/>
    <property type="evidence" value="ECO:0007669"/>
    <property type="project" value="UniProtKB-KW"/>
</dbReference>
<dbReference type="CDD" id="cd01092">
    <property type="entry name" value="APP-like"/>
    <property type="match status" value="1"/>
</dbReference>
<dbReference type="FunFam" id="3.90.230.10:FF:000014">
    <property type="entry name" value="Aminopeptidase P family protein"/>
    <property type="match status" value="1"/>
</dbReference>
<dbReference type="Gene3D" id="3.90.230.10">
    <property type="entry name" value="Creatinase/methionine aminopeptidase superfamily"/>
    <property type="match status" value="1"/>
</dbReference>
<dbReference type="Gene3D" id="3.40.350.10">
    <property type="entry name" value="Creatinase/prolidase N-terminal domain"/>
    <property type="match status" value="1"/>
</dbReference>
<dbReference type="InterPro" id="IPR029149">
    <property type="entry name" value="Creatin/AminoP/Spt16_N"/>
</dbReference>
<dbReference type="InterPro" id="IPR036005">
    <property type="entry name" value="Creatinase/aminopeptidase-like"/>
</dbReference>
<dbReference type="InterPro" id="IPR000587">
    <property type="entry name" value="Creatinase_N"/>
</dbReference>
<dbReference type="InterPro" id="IPR000994">
    <property type="entry name" value="Pept_M24"/>
</dbReference>
<dbReference type="InterPro" id="IPR050659">
    <property type="entry name" value="Peptidase_M24B"/>
</dbReference>
<dbReference type="InterPro" id="IPR001131">
    <property type="entry name" value="Peptidase_M24B_aminopep-P_CS"/>
</dbReference>
<dbReference type="PANTHER" id="PTHR46112">
    <property type="entry name" value="AMINOPEPTIDASE"/>
    <property type="match status" value="1"/>
</dbReference>
<dbReference type="PANTHER" id="PTHR46112:SF10">
    <property type="entry name" value="DIPEPTIDASE YKVY-RELATED"/>
    <property type="match status" value="1"/>
</dbReference>
<dbReference type="Pfam" id="PF01321">
    <property type="entry name" value="Creatinase_N"/>
    <property type="match status" value="1"/>
</dbReference>
<dbReference type="Pfam" id="PF00557">
    <property type="entry name" value="Peptidase_M24"/>
    <property type="match status" value="1"/>
</dbReference>
<dbReference type="SUPFAM" id="SSF55920">
    <property type="entry name" value="Creatinase/aminopeptidase"/>
    <property type="match status" value="1"/>
</dbReference>
<dbReference type="SUPFAM" id="SSF53092">
    <property type="entry name" value="Creatinase/prolidase N-terminal domain"/>
    <property type="match status" value="1"/>
</dbReference>
<dbReference type="PROSITE" id="PS00491">
    <property type="entry name" value="PROLINE_PEPTIDASE"/>
    <property type="match status" value="1"/>
</dbReference>
<reference key="1">
    <citation type="journal article" date="2003" name="Mol. Microbiol.">
        <title>Genome-based analysis of virulence genes in a non-biofilm-forming Staphylococcus epidermidis strain (ATCC 12228).</title>
        <authorList>
            <person name="Zhang Y.-Q."/>
            <person name="Ren S.-X."/>
            <person name="Li H.-L."/>
            <person name="Wang Y.-X."/>
            <person name="Fu G."/>
            <person name="Yang J."/>
            <person name="Qin Z.-Q."/>
            <person name="Miao Y.-G."/>
            <person name="Wang W.-Y."/>
            <person name="Chen R.-S."/>
            <person name="Shen Y."/>
            <person name="Chen Z."/>
            <person name="Yuan Z.-H."/>
            <person name="Zhao G.-P."/>
            <person name="Qu D."/>
            <person name="Danchin A."/>
            <person name="Wen Y.-M."/>
        </authorList>
    </citation>
    <scope>NUCLEOTIDE SEQUENCE [LARGE SCALE GENOMIC DNA]</scope>
    <source>
        <strain>ATCC 12228 / FDA PCI 1200</strain>
    </source>
</reference>
<sequence length="351" mass="40184">MTKIKEIKKVLQQEDADAAWITTPLNIFYFTGYRSEPHERLFALLIPSNEEPVLFCPKMEVEEVKQSPFKGKIIGYLDTENPFDKYSKTFSKMLIESEHLTVKRQRELTKAFNIEHYQDVDQSIKDLRNIKSEDEIINIKKAAALADKCIEIGKSFLKEGVEEREVVNHIENEIKKYGVNEMSFDTMVLFGDHAASPHGTPGDRKLQQNEFVLFDLGVVYHHYCSDMTRTIHFGTPNKEAQNIYNIVLKAETEAIKSIKPGVTIKDIDKIARDIIEEAGYGDYFPHRLGHGLGLEEHEYQDISSVNNNQLEAGMVITIEPGIYVPHVAGVRIEDDILVTENGYEILTQYEK</sequence>
<evidence type="ECO:0000255" key="1"/>
<evidence type="ECO:0000305" key="2"/>
<organism>
    <name type="scientific">Staphylococcus epidermidis (strain ATCC 12228 / FDA PCI 1200)</name>
    <dbReference type="NCBI Taxonomy" id="176280"/>
    <lineage>
        <taxon>Bacteria</taxon>
        <taxon>Bacillati</taxon>
        <taxon>Bacillota</taxon>
        <taxon>Bacilli</taxon>
        <taxon>Bacillales</taxon>
        <taxon>Staphylococcaceae</taxon>
        <taxon>Staphylococcus</taxon>
    </lineage>
</organism>
<name>Y1383_STAES</name>
<comment type="cofactor">
    <cofactor evidence="2">
        <name>Mn(2+)</name>
        <dbReference type="ChEBI" id="CHEBI:29035"/>
    </cofactor>
    <text evidence="2">Binds 2 manganese ions per subunit.</text>
</comment>
<comment type="similarity">
    <text evidence="2">Belongs to the peptidase M24B family.</text>
</comment>
<comment type="sequence caution" evidence="2">
    <conflict type="erroneous initiation">
        <sequence resource="EMBL-CDS" id="AAO04982"/>
    </conflict>
</comment>
<protein>
    <recommendedName>
        <fullName>Uncharacterized peptidase SE_1383</fullName>
        <ecNumber>3.4.-.-</ecNumber>
    </recommendedName>
</protein>
<feature type="chain" id="PRO_0000299429" description="Uncharacterized peptidase SE_1383">
    <location>
        <begin position="1"/>
        <end position="351"/>
    </location>
</feature>
<feature type="binding site" evidence="1">
    <location>
        <position position="215"/>
    </location>
    <ligand>
        <name>Mn(2+)</name>
        <dbReference type="ChEBI" id="CHEBI:29035"/>
        <label>2</label>
    </ligand>
</feature>
<feature type="binding site" evidence="1">
    <location>
        <position position="226"/>
    </location>
    <ligand>
        <name>Mn(2+)</name>
        <dbReference type="ChEBI" id="CHEBI:29035"/>
        <label>1</label>
    </ligand>
</feature>
<feature type="binding site" evidence="1">
    <location>
        <position position="226"/>
    </location>
    <ligand>
        <name>Mn(2+)</name>
        <dbReference type="ChEBI" id="CHEBI:29035"/>
        <label>2</label>
    </ligand>
</feature>
<feature type="binding site" evidence="1">
    <location>
        <position position="290"/>
    </location>
    <ligand>
        <name>Mn(2+)</name>
        <dbReference type="ChEBI" id="CHEBI:29035"/>
        <label>1</label>
    </ligand>
</feature>
<feature type="binding site" evidence="1">
    <location>
        <position position="319"/>
    </location>
    <ligand>
        <name>Mn(2+)</name>
        <dbReference type="ChEBI" id="CHEBI:29035"/>
        <label>1</label>
    </ligand>
</feature>
<feature type="binding site" evidence="1">
    <location>
        <position position="333"/>
    </location>
    <ligand>
        <name>Mn(2+)</name>
        <dbReference type="ChEBI" id="CHEBI:29035"/>
        <label>1</label>
    </ligand>
</feature>
<feature type="binding site" evidence="1">
    <location>
        <position position="333"/>
    </location>
    <ligand>
        <name>Mn(2+)</name>
        <dbReference type="ChEBI" id="CHEBI:29035"/>
        <label>2</label>
    </ligand>
</feature>
<gene>
    <name type="ordered locus">SE_1383</name>
</gene>
<accession>Q8CNW9</accession>
<proteinExistence type="inferred from homology"/>